<keyword id="KW-0007">Acetylation</keyword>
<keyword id="KW-0067">ATP-binding</keyword>
<keyword id="KW-0143">Chaperone</keyword>
<keyword id="KW-0256">Endoplasmic reticulum</keyword>
<keyword id="KW-0325">Glycoprotein</keyword>
<keyword id="KW-0547">Nucleotide-binding</keyword>
<keyword id="KW-0597">Phosphoprotein</keyword>
<keyword id="KW-0732">Signal</keyword>
<keyword id="KW-0346">Stress response</keyword>
<reference key="1">
    <citation type="journal article" date="1996" name="FEBS Lett.">
        <title>The 170 kDa glucose regulated stress protein is a large HSP70-, HSP110-like protein of the endoplasmic reticulum.</title>
        <authorList>
            <person name="Chen X."/>
            <person name="Easton D."/>
            <person name="Oh H.J."/>
            <person name="Lee-Yoon D.S."/>
            <person name="Liu X."/>
            <person name="Subjeck J."/>
        </authorList>
    </citation>
    <scope>NUCLEOTIDE SEQUENCE [MRNA]</scope>
    <scope>SUBCELLULAR LOCATION</scope>
    <scope>INDUCTION</scope>
</reference>
<name>HYOU1_CRIGR</name>
<protein>
    <recommendedName>
        <fullName>Hypoxia up-regulated protein 1</fullName>
    </recommendedName>
    <alternativeName>
        <fullName>150 kDa oxygen-regulated protein</fullName>
        <shortName>ORP-150</shortName>
    </alternativeName>
    <alternativeName>
        <fullName>170 kDa glucose-regulated protein</fullName>
        <shortName>GRP-170</shortName>
    </alternativeName>
</protein>
<dbReference type="EMBL" id="U34206">
    <property type="protein sequence ID" value="AAB00689.1"/>
    <property type="molecule type" value="mRNA"/>
</dbReference>
<dbReference type="PIR" id="S68689">
    <property type="entry name" value="S68689"/>
</dbReference>
<dbReference type="RefSeq" id="NP_001233670.1">
    <property type="nucleotide sequence ID" value="NM_001246741.1"/>
</dbReference>
<dbReference type="SMR" id="Q60432"/>
<dbReference type="GlyCosmos" id="Q60432">
    <property type="glycosylation" value="9 sites, No reported glycans"/>
</dbReference>
<dbReference type="PaxDb" id="10029-NP_001233670.1"/>
<dbReference type="GeneID" id="100689308"/>
<dbReference type="KEGG" id="cge:100689308"/>
<dbReference type="CTD" id="10525"/>
<dbReference type="eggNOG" id="KOG0104">
    <property type="taxonomic scope" value="Eukaryota"/>
</dbReference>
<dbReference type="OrthoDB" id="10262720at2759"/>
<dbReference type="PRO" id="PR:Q60432"/>
<dbReference type="Proteomes" id="UP000694386">
    <property type="component" value="Unplaced"/>
</dbReference>
<dbReference type="Proteomes" id="UP001108280">
    <property type="component" value="Chromosome 4"/>
</dbReference>
<dbReference type="GO" id="GO:0034663">
    <property type="term" value="C:endoplasmic reticulum chaperone complex"/>
    <property type="evidence" value="ECO:0007669"/>
    <property type="project" value="TreeGrafter"/>
</dbReference>
<dbReference type="GO" id="GO:0005788">
    <property type="term" value="C:endoplasmic reticulum lumen"/>
    <property type="evidence" value="ECO:0007669"/>
    <property type="project" value="UniProtKB-SubCell"/>
</dbReference>
<dbReference type="GO" id="GO:0005524">
    <property type="term" value="F:ATP binding"/>
    <property type="evidence" value="ECO:0007669"/>
    <property type="project" value="UniProtKB-KW"/>
</dbReference>
<dbReference type="GO" id="GO:0140662">
    <property type="term" value="F:ATP-dependent protein folding chaperone"/>
    <property type="evidence" value="ECO:0007669"/>
    <property type="project" value="InterPro"/>
</dbReference>
<dbReference type="GO" id="GO:0030968">
    <property type="term" value="P:endoplasmic reticulum unfolded protein response"/>
    <property type="evidence" value="ECO:0007669"/>
    <property type="project" value="TreeGrafter"/>
</dbReference>
<dbReference type="GO" id="GO:1903298">
    <property type="term" value="P:negative regulation of hypoxia-induced intrinsic apoptotic signaling pathway"/>
    <property type="evidence" value="ECO:0007669"/>
    <property type="project" value="TreeGrafter"/>
</dbReference>
<dbReference type="CDD" id="cd10230">
    <property type="entry name" value="ASKHA_NBD_HSP70_HYOU1"/>
    <property type="match status" value="1"/>
</dbReference>
<dbReference type="FunFam" id="1.20.1270.10:FF:000013">
    <property type="entry name" value="Hypoxia up-regulated protein 1"/>
    <property type="match status" value="1"/>
</dbReference>
<dbReference type="FunFam" id="2.60.34.10:FF:000009">
    <property type="entry name" value="Hypoxia up-regulated protein 1"/>
    <property type="match status" value="1"/>
</dbReference>
<dbReference type="FunFam" id="3.90.640.10:FF:000012">
    <property type="entry name" value="Hypoxia up-regulated protein 1"/>
    <property type="match status" value="1"/>
</dbReference>
<dbReference type="FunFam" id="3.30.30.30:FF:000004">
    <property type="entry name" value="hypoxia up-regulated protein 1"/>
    <property type="match status" value="1"/>
</dbReference>
<dbReference type="Gene3D" id="1.20.1270.10">
    <property type="match status" value="1"/>
</dbReference>
<dbReference type="Gene3D" id="3.30.30.30">
    <property type="match status" value="1"/>
</dbReference>
<dbReference type="Gene3D" id="3.30.420.40">
    <property type="match status" value="2"/>
</dbReference>
<dbReference type="Gene3D" id="3.90.640.10">
    <property type="entry name" value="Actin, Chain A, domain 4"/>
    <property type="match status" value="1"/>
</dbReference>
<dbReference type="Gene3D" id="2.60.34.10">
    <property type="entry name" value="Substrate Binding Domain Of DNAk, Chain A, domain 1"/>
    <property type="match status" value="1"/>
</dbReference>
<dbReference type="InterPro" id="IPR043129">
    <property type="entry name" value="ATPase_NBD"/>
</dbReference>
<dbReference type="InterPro" id="IPR018181">
    <property type="entry name" value="Heat_shock_70_CS"/>
</dbReference>
<dbReference type="InterPro" id="IPR029048">
    <property type="entry name" value="HSP70_C_sf"/>
</dbReference>
<dbReference type="InterPro" id="IPR029047">
    <property type="entry name" value="HSP70_peptide-bd_sf"/>
</dbReference>
<dbReference type="InterPro" id="IPR013126">
    <property type="entry name" value="Hsp_70_fam"/>
</dbReference>
<dbReference type="PANTHER" id="PTHR45639">
    <property type="entry name" value="HSC70CB, ISOFORM G-RELATED"/>
    <property type="match status" value="1"/>
</dbReference>
<dbReference type="PANTHER" id="PTHR45639:SF3">
    <property type="entry name" value="HYPOXIA UP-REGULATED PROTEIN 1"/>
    <property type="match status" value="1"/>
</dbReference>
<dbReference type="Pfam" id="PF00012">
    <property type="entry name" value="HSP70"/>
    <property type="match status" value="1"/>
</dbReference>
<dbReference type="PRINTS" id="PR00301">
    <property type="entry name" value="HEATSHOCK70"/>
</dbReference>
<dbReference type="SUPFAM" id="SSF53067">
    <property type="entry name" value="Actin-like ATPase domain"/>
    <property type="match status" value="2"/>
</dbReference>
<dbReference type="SUPFAM" id="SSF100934">
    <property type="entry name" value="Heat shock protein 70kD (HSP70), C-terminal subdomain"/>
    <property type="match status" value="1"/>
</dbReference>
<dbReference type="PROSITE" id="PS00329">
    <property type="entry name" value="HSP70_2"/>
    <property type="match status" value="1"/>
</dbReference>
<dbReference type="PROSITE" id="PS01036">
    <property type="entry name" value="HSP70_3"/>
    <property type="match status" value="1"/>
</dbReference>
<accession>Q60432</accession>
<gene>
    <name type="primary">HYOU1</name>
    <name type="synonym">GRP170</name>
    <name evidence="3" type="synonym">HSPH4</name>
    <name type="synonym">ORP150</name>
</gene>
<evidence type="ECO:0000250" key="1"/>
<evidence type="ECO:0000250" key="2">
    <source>
        <dbReference type="UniProtKB" id="Q9JKR6"/>
    </source>
</evidence>
<evidence type="ECO:0000250" key="3">
    <source>
        <dbReference type="UniProtKB" id="Q9Y4L1"/>
    </source>
</evidence>
<evidence type="ECO:0000255" key="4"/>
<evidence type="ECO:0000256" key="5">
    <source>
        <dbReference type="SAM" id="MobiDB-lite"/>
    </source>
</evidence>
<evidence type="ECO:0000269" key="6">
    <source>
    </source>
</evidence>
<evidence type="ECO:0000305" key="7"/>
<comment type="function">
    <text evidence="1 2">Has a pivotal role in cytoprotective cellular mechanisms triggered by oxygen deprivation. Promotes HSPA5/BiP-mediated ATP nucleotide exchange and thereby activates the unfolded protein response (UPR) pathway in the presence of endoplasmic reticulum stress (By similarity). May play a role as a molecular chaperone and participate in protein folding (By similarity).</text>
</comment>
<comment type="subunit">
    <text evidence="1">Part of a large chaperone multiprotein complex comprising DNAJB11, HSP90B1, HSPA5, HYOU, PDIA2, PDIA4, PDIA6, PPIB, SDF2L1, UGGT1 and very small amounts of ERP29, but not, or at very low levels, CALR nor CANX.</text>
</comment>
<comment type="subcellular location">
    <subcellularLocation>
        <location evidence="6">Endoplasmic reticulum lumen</location>
    </subcellularLocation>
</comment>
<comment type="induction">
    <text evidence="6">By anoxia.</text>
</comment>
<comment type="similarity">
    <text evidence="7">Belongs to the heat shock protein 70 family.</text>
</comment>
<sequence length="999" mass="111271">MAATVRRQRPRRLLCWTLVAVLLADLLALSDTLAVMSVDLGSESMKVAIVKPGVPMEIVLNKESRRKTPVTVTLKENERFLGDSAAGMAIKNPKATLRYFQHLLGKQADNPHVALYRDRFPEHELNIDPQRQTVRFQISPQLQFSPEEVLGMVLNYSRSLAEDFAEQPIKDAVITVPAFFNQAERRAVLQAARMAGLKVLQLINDNTATALSYGVFRRKDINSTAQNVMFYDMGSGTTVCTIVTYQTVKTKEAGMQPQLQIRGVGFDRTLGGLEMELRLREHLAKLFNEQRRGQKAKDVRENPRAMAKLLREANRLKTVLSANADHMAQIEGLMDDVDFKAKVTRVESEELCADLFERVPGPVQQALQSAEMSLDEIEQVILVGGATRVPKVQEVLLKAVGKEELGKNINADEAAAMGAVYQAAALSKAFKVKPFVVRDAVIYPILVEFTREVEEEPGVRSLKHNKRVLFSRMGPYPQGKVITFNRYSHDFNFHINYGDLGFLGPEDLRVFGSQNLTTVKLKGVGESLKKYPDYESKGIKAHFNLDESGVLSLDRVESVFETLVEDSPEEESTLTKLGNTISSLFGGGTSSDAKENGTDAVQEEEESPTEGSKDEPGEQGDLKEETEAPVEDTSQPPPPEPKGDAAPEGEKPDEKESGGKSEAQKPEEKGQSGPEGVPPAPEEEKKQKPARKQKMVEEIGVELAVLDLPDLPEDELARSVKKLEDLTLRDLEKQEREKAANSLEAFIFETQDKLYQPEYQEVSTEEQREEISGKLSATSTWLEDEGFGATTVMLKEKLAELKKLCQGLFFRVEERRKWPERLSALDNLLNHSSIFLKGARLIPEMDQIFTEVEMTTLEKVINDTWAWKNATLAEQAKLPATEKPVLLSKDIEAKMMALDREVQYLLNKAKFTKPRPRPKDKNGTRTEPPLNATAGDQEEKVIPPAGQPEEAKPILEPDKEETTTEPTDSEPLELGGPGAESEPKEQTAGQKRSSKNDEL</sequence>
<feature type="signal peptide" evidence="1">
    <location>
        <begin position="1"/>
        <end position="32"/>
    </location>
</feature>
<feature type="chain" id="PRO_0000013537" description="Hypoxia up-regulated protein 1">
    <location>
        <begin position="33"/>
        <end position="999"/>
    </location>
</feature>
<feature type="region of interest" description="Disordered" evidence="5">
    <location>
        <begin position="564"/>
        <end position="694"/>
    </location>
</feature>
<feature type="region of interest" description="Disordered" evidence="5">
    <location>
        <begin position="909"/>
        <end position="999"/>
    </location>
</feature>
<feature type="short sequence motif" description="Prevents secretion from ER" evidence="4">
    <location>
        <begin position="996"/>
        <end position="999"/>
    </location>
</feature>
<feature type="compositionally biased region" description="Polar residues" evidence="5">
    <location>
        <begin position="574"/>
        <end position="583"/>
    </location>
</feature>
<feature type="compositionally biased region" description="Basic and acidic residues" evidence="5">
    <location>
        <begin position="611"/>
        <end position="626"/>
    </location>
</feature>
<feature type="compositionally biased region" description="Basic and acidic residues" evidence="5">
    <location>
        <begin position="641"/>
        <end position="670"/>
    </location>
</feature>
<feature type="compositionally biased region" description="Basic and acidic residues" evidence="5">
    <location>
        <begin position="949"/>
        <end position="962"/>
    </location>
</feature>
<feature type="modified residue" description="Phosphoserine" evidence="3">
    <location>
        <position position="567"/>
    </location>
</feature>
<feature type="modified residue" description="N6-acetyllysine" evidence="2">
    <location>
        <position position="883"/>
    </location>
</feature>
<feature type="glycosylation site" description="N-linked (GlcNAc...) asparagine" evidence="4">
    <location>
        <position position="155"/>
    </location>
</feature>
<feature type="glycosylation site" description="N-linked (GlcNAc...) asparagine" evidence="4">
    <location>
        <position position="222"/>
    </location>
</feature>
<feature type="glycosylation site" description="N-linked (GlcNAc...) asparagine" evidence="4">
    <location>
        <position position="515"/>
    </location>
</feature>
<feature type="glycosylation site" description="N-linked (GlcNAc...) asparagine" evidence="4">
    <location>
        <position position="596"/>
    </location>
</feature>
<feature type="glycosylation site" description="N-linked (GlcNAc...) asparagine" evidence="4">
    <location>
        <position position="830"/>
    </location>
</feature>
<feature type="glycosylation site" description="N-linked (GlcNAc...) asparagine" evidence="4">
    <location>
        <position position="862"/>
    </location>
</feature>
<feature type="glycosylation site" description="N-linked (GlcNAc...) asparagine" evidence="4">
    <location>
        <position position="869"/>
    </location>
</feature>
<feature type="glycosylation site" description="N-linked (GlcNAc...) asparagine" evidence="4">
    <location>
        <position position="922"/>
    </location>
</feature>
<feature type="glycosylation site" description="N-linked (GlcNAc...) asparagine" evidence="4">
    <location>
        <position position="931"/>
    </location>
</feature>
<proteinExistence type="evidence at transcript level"/>
<organism>
    <name type="scientific">Cricetulus griseus</name>
    <name type="common">Chinese hamster</name>
    <name type="synonym">Cricetulus barabensis griseus</name>
    <dbReference type="NCBI Taxonomy" id="10029"/>
    <lineage>
        <taxon>Eukaryota</taxon>
        <taxon>Metazoa</taxon>
        <taxon>Chordata</taxon>
        <taxon>Craniata</taxon>
        <taxon>Vertebrata</taxon>
        <taxon>Euteleostomi</taxon>
        <taxon>Mammalia</taxon>
        <taxon>Eutheria</taxon>
        <taxon>Euarchontoglires</taxon>
        <taxon>Glires</taxon>
        <taxon>Rodentia</taxon>
        <taxon>Myomorpha</taxon>
        <taxon>Muroidea</taxon>
        <taxon>Cricetidae</taxon>
        <taxon>Cricetinae</taxon>
        <taxon>Cricetulus</taxon>
    </lineage>
</organism>